<comment type="function">
    <text evidence="1">Catalyzes the N-acylation of UDP-3-O-(hydroxytetradecanoyl)glucosamine using 3-hydroxytetradecanoyl-ACP as the acyl donor. Is involved in the biosynthesis of lipid A, a phosphorylated glycolipid that anchors the lipopolysaccharide to the outer membrane of the cell.</text>
</comment>
<comment type="catalytic activity">
    <reaction evidence="1">
        <text>a UDP-3-O-[(3R)-3-hydroxyacyl]-alpha-D-glucosamine + a (3R)-hydroxyacyl-[ACP] = a UDP-2-N,3-O-bis[(3R)-3-hydroxyacyl]-alpha-D-glucosamine + holo-[ACP] + H(+)</text>
        <dbReference type="Rhea" id="RHEA:53836"/>
        <dbReference type="Rhea" id="RHEA-COMP:9685"/>
        <dbReference type="Rhea" id="RHEA-COMP:9945"/>
        <dbReference type="ChEBI" id="CHEBI:15378"/>
        <dbReference type="ChEBI" id="CHEBI:64479"/>
        <dbReference type="ChEBI" id="CHEBI:78827"/>
        <dbReference type="ChEBI" id="CHEBI:137740"/>
        <dbReference type="ChEBI" id="CHEBI:137748"/>
        <dbReference type="EC" id="2.3.1.191"/>
    </reaction>
</comment>
<comment type="catalytic activity">
    <reaction evidence="1">
        <text>UDP-3-O-[(3R)-3-hydroxytetradecanoyl]-alpha-D-glucosamine + (3R)-hydroxytetradecanoyl-[ACP] = UDP-2-N,3-O-bis[(3R)-3-hydroxytetradecanoyl]-alpha-D-glucosamine + holo-[ACP] + H(+)</text>
        <dbReference type="Rhea" id="RHEA:17817"/>
        <dbReference type="Rhea" id="RHEA-COMP:9646"/>
        <dbReference type="Rhea" id="RHEA-COMP:9685"/>
        <dbReference type="ChEBI" id="CHEBI:15378"/>
        <dbReference type="ChEBI" id="CHEBI:64479"/>
        <dbReference type="ChEBI" id="CHEBI:71573"/>
        <dbReference type="ChEBI" id="CHEBI:78474"/>
        <dbReference type="ChEBI" id="CHEBI:78847"/>
    </reaction>
</comment>
<comment type="pathway">
    <text evidence="1">Glycolipid biosynthesis; lipid IV(A) biosynthesis; lipid IV(A) from (3R)-3-hydroxytetradecanoyl-[acyl-carrier-protein] and UDP-N-acetyl-alpha-D-glucosamine: step 3/6.</text>
</comment>
<comment type="subunit">
    <text evidence="1">Homotrimer.</text>
</comment>
<comment type="similarity">
    <text evidence="1">Belongs to the transferase hexapeptide repeat family. LpxD subfamily.</text>
</comment>
<proteinExistence type="inferred from homology"/>
<keyword id="KW-0012">Acyltransferase</keyword>
<keyword id="KW-0441">Lipid A biosynthesis</keyword>
<keyword id="KW-0444">Lipid biosynthesis</keyword>
<keyword id="KW-0443">Lipid metabolism</keyword>
<keyword id="KW-1185">Reference proteome</keyword>
<keyword id="KW-0677">Repeat</keyword>
<keyword id="KW-0808">Transferase</keyword>
<dbReference type="EC" id="2.3.1.191" evidence="1"/>
<dbReference type="EMBL" id="CP000034">
    <property type="protein sequence ID" value="ABB60427.1"/>
    <property type="molecule type" value="Genomic_DNA"/>
</dbReference>
<dbReference type="RefSeq" id="WP_001139279.1">
    <property type="nucleotide sequence ID" value="NC_007606.1"/>
</dbReference>
<dbReference type="RefSeq" id="YP_401916.1">
    <property type="nucleotide sequence ID" value="NC_007606.1"/>
</dbReference>
<dbReference type="SMR" id="Q32JT0"/>
<dbReference type="STRING" id="300267.SDY_0195"/>
<dbReference type="EnsemblBacteria" id="ABB60427">
    <property type="protein sequence ID" value="ABB60427"/>
    <property type="gene ID" value="SDY_0195"/>
</dbReference>
<dbReference type="GeneID" id="86862689"/>
<dbReference type="KEGG" id="sdy:SDY_0195"/>
<dbReference type="PATRIC" id="fig|300267.13.peg.226"/>
<dbReference type="HOGENOM" id="CLU_049865_0_1_6"/>
<dbReference type="UniPathway" id="UPA00359">
    <property type="reaction ID" value="UER00479"/>
</dbReference>
<dbReference type="Proteomes" id="UP000002716">
    <property type="component" value="Chromosome"/>
</dbReference>
<dbReference type="GO" id="GO:0016020">
    <property type="term" value="C:membrane"/>
    <property type="evidence" value="ECO:0007669"/>
    <property type="project" value="GOC"/>
</dbReference>
<dbReference type="GO" id="GO:0016410">
    <property type="term" value="F:N-acyltransferase activity"/>
    <property type="evidence" value="ECO:0007669"/>
    <property type="project" value="InterPro"/>
</dbReference>
<dbReference type="GO" id="GO:0103118">
    <property type="term" value="F:UDP-3-O-(R-3-hydroxymyristoyl)-glucosamine N-acyltransferase activity"/>
    <property type="evidence" value="ECO:0007669"/>
    <property type="project" value="UniProtKB-EC"/>
</dbReference>
<dbReference type="GO" id="GO:0009245">
    <property type="term" value="P:lipid A biosynthetic process"/>
    <property type="evidence" value="ECO:0007669"/>
    <property type="project" value="UniProtKB-UniRule"/>
</dbReference>
<dbReference type="CDD" id="cd03352">
    <property type="entry name" value="LbH_LpxD"/>
    <property type="match status" value="1"/>
</dbReference>
<dbReference type="FunFam" id="1.20.5.170:FF:000032">
    <property type="entry name" value="UDP-3-O-(3-hydroxymyristoyl)glucosamine N-acyltransferase"/>
    <property type="match status" value="1"/>
</dbReference>
<dbReference type="FunFam" id="2.160.10.10:FF:000005">
    <property type="entry name" value="UDP-3-O-(3-hydroxymyristoyl)glucosamine N-acyltransferase"/>
    <property type="match status" value="1"/>
</dbReference>
<dbReference type="FunFam" id="3.40.1390.10:FF:000001">
    <property type="entry name" value="UDP-3-O-(3-hydroxymyristoyl)glucosamine N-acyltransferase"/>
    <property type="match status" value="1"/>
</dbReference>
<dbReference type="Gene3D" id="1.20.5.170">
    <property type="match status" value="1"/>
</dbReference>
<dbReference type="Gene3D" id="2.160.10.10">
    <property type="entry name" value="Hexapeptide repeat proteins"/>
    <property type="match status" value="1"/>
</dbReference>
<dbReference type="Gene3D" id="3.40.1390.10">
    <property type="entry name" value="MurE/MurF, N-terminal domain"/>
    <property type="match status" value="1"/>
</dbReference>
<dbReference type="HAMAP" id="MF_00523">
    <property type="entry name" value="LpxD"/>
    <property type="match status" value="1"/>
</dbReference>
<dbReference type="InterPro" id="IPR001451">
    <property type="entry name" value="Hexapep"/>
</dbReference>
<dbReference type="InterPro" id="IPR018357">
    <property type="entry name" value="Hexapep_transf_CS"/>
</dbReference>
<dbReference type="InterPro" id="IPR007691">
    <property type="entry name" value="LpxD"/>
</dbReference>
<dbReference type="InterPro" id="IPR011004">
    <property type="entry name" value="Trimer_LpxA-like_sf"/>
</dbReference>
<dbReference type="InterPro" id="IPR020573">
    <property type="entry name" value="UDP_GlcNAc_AcTrfase_non-rep"/>
</dbReference>
<dbReference type="NCBIfam" id="TIGR01853">
    <property type="entry name" value="lipid_A_lpxD"/>
    <property type="match status" value="1"/>
</dbReference>
<dbReference type="NCBIfam" id="NF002060">
    <property type="entry name" value="PRK00892.1"/>
    <property type="match status" value="1"/>
</dbReference>
<dbReference type="PANTHER" id="PTHR43378">
    <property type="entry name" value="UDP-3-O-ACYLGLUCOSAMINE N-ACYLTRANSFERASE"/>
    <property type="match status" value="1"/>
</dbReference>
<dbReference type="PANTHER" id="PTHR43378:SF2">
    <property type="entry name" value="UDP-3-O-ACYLGLUCOSAMINE N-ACYLTRANSFERASE 1, MITOCHONDRIAL-RELATED"/>
    <property type="match status" value="1"/>
</dbReference>
<dbReference type="Pfam" id="PF00132">
    <property type="entry name" value="Hexapep"/>
    <property type="match status" value="3"/>
</dbReference>
<dbReference type="Pfam" id="PF04613">
    <property type="entry name" value="LpxD"/>
    <property type="match status" value="1"/>
</dbReference>
<dbReference type="SUPFAM" id="SSF51161">
    <property type="entry name" value="Trimeric LpxA-like enzymes"/>
    <property type="match status" value="1"/>
</dbReference>
<dbReference type="PROSITE" id="PS00101">
    <property type="entry name" value="HEXAPEP_TRANSFERASES"/>
    <property type="match status" value="4"/>
</dbReference>
<accession>Q32JT0</accession>
<protein>
    <recommendedName>
        <fullName evidence="1">UDP-3-O-(3-hydroxymyristoyl)glucosamine N-acyltransferase</fullName>
        <shortName evidence="1">UDP-3-O-(3-OHC14)-GlcN N-acyltransferase</shortName>
        <ecNumber evidence="1">2.3.1.191</ecNumber>
    </recommendedName>
    <alternativeName>
        <fullName evidence="1">UDP-3-O-(3-hydroxytetradecanoyl)glucosamine N-acyltransferase</fullName>
    </alternativeName>
</protein>
<feature type="chain" id="PRO_0000264439" description="UDP-3-O-(3-hydroxymyristoyl)glucosamine N-acyltransferase">
    <location>
        <begin position="1"/>
        <end position="341"/>
    </location>
</feature>
<feature type="active site" description="Proton acceptor" evidence="1">
    <location>
        <position position="239"/>
    </location>
</feature>
<organism>
    <name type="scientific">Shigella dysenteriae serotype 1 (strain Sd197)</name>
    <dbReference type="NCBI Taxonomy" id="300267"/>
    <lineage>
        <taxon>Bacteria</taxon>
        <taxon>Pseudomonadati</taxon>
        <taxon>Pseudomonadota</taxon>
        <taxon>Gammaproteobacteria</taxon>
        <taxon>Enterobacterales</taxon>
        <taxon>Enterobacteriaceae</taxon>
        <taxon>Shigella</taxon>
    </lineage>
</organism>
<evidence type="ECO:0000255" key="1">
    <source>
        <dbReference type="HAMAP-Rule" id="MF_00523"/>
    </source>
</evidence>
<reference key="1">
    <citation type="journal article" date="2005" name="Nucleic Acids Res.">
        <title>Genome dynamics and diversity of Shigella species, the etiologic agents of bacillary dysentery.</title>
        <authorList>
            <person name="Yang F."/>
            <person name="Yang J."/>
            <person name="Zhang X."/>
            <person name="Chen L."/>
            <person name="Jiang Y."/>
            <person name="Yan Y."/>
            <person name="Tang X."/>
            <person name="Wang J."/>
            <person name="Xiong Z."/>
            <person name="Dong J."/>
            <person name="Xue Y."/>
            <person name="Zhu Y."/>
            <person name="Xu X."/>
            <person name="Sun L."/>
            <person name="Chen S."/>
            <person name="Nie H."/>
            <person name="Peng J."/>
            <person name="Xu J."/>
            <person name="Wang Y."/>
            <person name="Yuan Z."/>
            <person name="Wen Y."/>
            <person name="Yao Z."/>
            <person name="Shen Y."/>
            <person name="Qiang B."/>
            <person name="Hou Y."/>
            <person name="Yu J."/>
            <person name="Jin Q."/>
        </authorList>
    </citation>
    <scope>NUCLEOTIDE SEQUENCE [LARGE SCALE GENOMIC DNA]</scope>
    <source>
        <strain>Sd197</strain>
    </source>
</reference>
<sequence length="341" mass="36038">MPSIRLADLAQQLDAELHGDGDIVITGVASMQSAQTGHITFMVNPKYREHLGLCQASAVVMTQDDLPFAKSAALVVKNPYLTYARMAQILDTTPQPAQNIAPSAVIDATAKLGNNVSIGANAVIESGVELGDNVIIGAGCFVGKNSKIGAGSRLWANVTIYHEIQIGQNCLIQSGTVVGADGFGYANDRGNWVKIPQIGRVIIGDRVEIGACTTIDRGALDDTIIGNGVIIDNQCQIAHNVVIGDNTAVAGGVIMAGSLKIGRYCMIGGASVINGHMEICDKVTVTGMGMVMRPITEPGVYSSGIPLQPNKVWRKTAALVMNIDDMSKRLKSLERKVNQQD</sequence>
<gene>
    <name evidence="1" type="primary">lpxD</name>
    <name type="ordered locus">SDY_0195</name>
</gene>
<name>LPXD_SHIDS</name>